<evidence type="ECO:0000250" key="1">
    <source>
        <dbReference type="UniProtKB" id="P23431"/>
    </source>
</evidence>
<evidence type="ECO:0000255" key="2"/>
<evidence type="ECO:0000305" key="3"/>
<name>E13B_CAPAA</name>
<keyword id="KW-0903">Direct protein sequencing</keyword>
<keyword id="KW-0326">Glycosidase</keyword>
<keyword id="KW-0378">Hydrolase</keyword>
<keyword id="KW-0611">Plant defense</keyword>
<keyword id="KW-0926">Vacuole</keyword>
<accession>P86080</accession>
<sequence length="16" mass="1673">GSNIEVMLGLPNSDVK</sequence>
<reference evidence="3" key="1">
    <citation type="submission" date="2008-07" db="UniProtKB">
        <authorList>
            <person name="Belchi-Navarro S."/>
            <person name="Almagro L."/>
            <person name="Pedreno M.A."/>
        </authorList>
    </citation>
    <scope>PROTEIN SEQUENCE</scope>
</reference>
<comment type="function">
    <text evidence="1">Implicated in the defense of plants against pathogens.</text>
</comment>
<comment type="catalytic activity">
    <reaction evidence="1">
        <text>Hydrolysis of (1-&gt;3)-beta-D-glucosidic linkages in (1-&gt;3)-beta-D-glucans.</text>
        <dbReference type="EC" id="3.2.1.39"/>
    </reaction>
</comment>
<comment type="subcellular location">
    <subcellularLocation>
        <location evidence="1">Vacuole</location>
    </subcellularLocation>
</comment>
<comment type="similarity">
    <text evidence="2">Belongs to the glycosyl hydrolase 17 family.</text>
</comment>
<organism>
    <name type="scientific">Capsicum annuum var. annuum</name>
    <name type="common">Red pepper</name>
    <dbReference type="NCBI Taxonomy" id="40321"/>
    <lineage>
        <taxon>Eukaryota</taxon>
        <taxon>Viridiplantae</taxon>
        <taxon>Streptophyta</taxon>
        <taxon>Embryophyta</taxon>
        <taxon>Tracheophyta</taxon>
        <taxon>Spermatophyta</taxon>
        <taxon>Magnoliopsida</taxon>
        <taxon>eudicotyledons</taxon>
        <taxon>Gunneridae</taxon>
        <taxon>Pentapetalae</taxon>
        <taxon>asterids</taxon>
        <taxon>lamiids</taxon>
        <taxon>Solanales</taxon>
        <taxon>Solanaceae</taxon>
        <taxon>Solanoideae</taxon>
        <taxon>Capsiceae</taxon>
        <taxon>Capsicum</taxon>
    </lineage>
</organism>
<protein>
    <recommendedName>
        <fullName evidence="1">Glucan endo-1,3-beta-glucosidase, basic vacuolar isoform</fullName>
        <ecNumber>3.2.1.39</ecNumber>
    </recommendedName>
    <alternativeName>
        <fullName evidence="1">(1-&gt;3)-beta-glucan endohydrolase</fullName>
        <shortName evidence="1">(1-&gt;3)-beta-glucanase</shortName>
    </alternativeName>
    <alternativeName>
        <fullName evidence="1">Beta-1,3-endoglucanase, basic</fullName>
    </alternativeName>
</protein>
<proteinExistence type="evidence at protein level"/>
<dbReference type="EC" id="3.2.1.39"/>
<dbReference type="GO" id="GO:0005773">
    <property type="term" value="C:vacuole"/>
    <property type="evidence" value="ECO:0007669"/>
    <property type="project" value="UniProtKB-SubCell"/>
</dbReference>
<dbReference type="GO" id="GO:0042973">
    <property type="term" value="F:glucan endo-1,3-beta-D-glucosidase activity"/>
    <property type="evidence" value="ECO:0007669"/>
    <property type="project" value="UniProtKB-EC"/>
</dbReference>
<dbReference type="GO" id="GO:0006952">
    <property type="term" value="P:defense response"/>
    <property type="evidence" value="ECO:0007669"/>
    <property type="project" value="UniProtKB-KW"/>
</dbReference>
<feature type="chain" id="PRO_0000362994" description="Glucan endo-1,3-beta-glucosidase, basic vacuolar isoform">
    <location>
        <begin position="1" status="less than"/>
        <end position="16" status="greater than"/>
    </location>
</feature>
<feature type="unsure residue" description="I or L">
    <location>
        <position position="4"/>
    </location>
</feature>
<feature type="unsure residue" description="M or F">
    <location>
        <position position="7"/>
    </location>
</feature>
<feature type="unsure residue" description="L or I">
    <location>
        <position position="8"/>
    </location>
</feature>
<feature type="unsure residue" description="L or I">
    <location>
        <position position="10"/>
    </location>
</feature>
<feature type="unsure residue" description="K or Q">
    <location>
        <position position="16"/>
    </location>
</feature>
<feature type="non-terminal residue">
    <location>
        <position position="1"/>
    </location>
</feature>
<feature type="non-terminal residue">
    <location>
        <position position="16"/>
    </location>
</feature>